<gene>
    <name type="primary">mgfK</name>
    <name type="synonym">yvcK</name>
    <name type="ordered locus">BSU34760</name>
</gene>
<sequence>MGQKPKIAIFGGGTGLSVLLRGLKHKPVDITAIVTVADDGGSSGRLRNELKIPPPGDIRNVLAALSDVEPLVEDLFQHRFNKGNDLTGHSLGNLILAAMTNITGDFFHAVTEMSKVLNVRGKVLPAANASVVLHAEMEDGRVVSGESTIPEYGQRIKRVFLTPEQIDPLPETIDVIREADLIIIGPGSLYTSILPNLLVPKIGEEVIKAPAKKVYICNVMTQPGETLHYTAADHVKALNQHMGCGFIDTILVNSEDIPDEIKRKYEMESARPVDFDIEELKAMGLEVIRDQIVTYKNDVIRHDTHKVASLLVDLLKE</sequence>
<protein>
    <recommendedName>
        <fullName evidence="1">Gluconeogenesis factor</fullName>
    </recommendedName>
</protein>
<keyword id="KW-0963">Cytoplasm</keyword>
<keyword id="KW-1185">Reference proteome</keyword>
<dbReference type="EMBL" id="Z94043">
    <property type="protein sequence ID" value="CAB08058.1"/>
    <property type="molecule type" value="Genomic_DNA"/>
</dbReference>
<dbReference type="EMBL" id="AL009126">
    <property type="protein sequence ID" value="CAB15481.2"/>
    <property type="molecule type" value="Genomic_DNA"/>
</dbReference>
<dbReference type="PIR" id="A70032">
    <property type="entry name" value="A70032"/>
</dbReference>
<dbReference type="RefSeq" id="NP_391356.2">
    <property type="nucleotide sequence ID" value="NC_000964.3"/>
</dbReference>
<dbReference type="RefSeq" id="WP_003244450.1">
    <property type="nucleotide sequence ID" value="NZ_OZ025638.1"/>
</dbReference>
<dbReference type="SMR" id="O06974"/>
<dbReference type="FunCoup" id="O06974">
    <property type="interactions" value="103"/>
</dbReference>
<dbReference type="STRING" id="224308.BSU34760"/>
<dbReference type="PaxDb" id="224308-BSU34760"/>
<dbReference type="EnsemblBacteria" id="CAB15481">
    <property type="protein sequence ID" value="CAB15481"/>
    <property type="gene ID" value="BSU_34760"/>
</dbReference>
<dbReference type="GeneID" id="936527"/>
<dbReference type="KEGG" id="bsu:BSU34760"/>
<dbReference type="PATRIC" id="fig|224308.179.peg.3764"/>
<dbReference type="eggNOG" id="COG0391">
    <property type="taxonomic scope" value="Bacteria"/>
</dbReference>
<dbReference type="InParanoid" id="O06974"/>
<dbReference type="OrthoDB" id="9783842at2"/>
<dbReference type="PhylomeDB" id="O06974"/>
<dbReference type="BioCyc" id="BSUB:BSU34760-MONOMER"/>
<dbReference type="Proteomes" id="UP000001570">
    <property type="component" value="Chromosome"/>
</dbReference>
<dbReference type="GO" id="GO:0005737">
    <property type="term" value="C:cytoplasm"/>
    <property type="evidence" value="ECO:0007669"/>
    <property type="project" value="UniProtKB-SubCell"/>
</dbReference>
<dbReference type="GO" id="GO:0043743">
    <property type="term" value="F:LPPG:FO 2-phospho-L-lactate transferase activity"/>
    <property type="evidence" value="ECO:0007669"/>
    <property type="project" value="InterPro"/>
</dbReference>
<dbReference type="GO" id="GO:0008360">
    <property type="term" value="P:regulation of cell shape"/>
    <property type="evidence" value="ECO:0007669"/>
    <property type="project" value="UniProtKB-UniRule"/>
</dbReference>
<dbReference type="CDD" id="cd07187">
    <property type="entry name" value="YvcK_like"/>
    <property type="match status" value="1"/>
</dbReference>
<dbReference type="Gene3D" id="3.40.50.10680">
    <property type="entry name" value="CofD-like domains"/>
    <property type="match status" value="1"/>
</dbReference>
<dbReference type="HAMAP" id="MF_00973">
    <property type="entry name" value="Gluconeogen_factor"/>
    <property type="match status" value="1"/>
</dbReference>
<dbReference type="InterPro" id="IPR002882">
    <property type="entry name" value="CofD"/>
</dbReference>
<dbReference type="InterPro" id="IPR038136">
    <property type="entry name" value="CofD-like_dom_sf"/>
</dbReference>
<dbReference type="InterPro" id="IPR010119">
    <property type="entry name" value="Gluconeogen_factor"/>
</dbReference>
<dbReference type="NCBIfam" id="TIGR01826">
    <property type="entry name" value="CofD_related"/>
    <property type="match status" value="1"/>
</dbReference>
<dbReference type="PANTHER" id="PTHR30135:SF3">
    <property type="entry name" value="GLUCONEOGENESIS FACTOR-RELATED"/>
    <property type="match status" value="1"/>
</dbReference>
<dbReference type="PANTHER" id="PTHR30135">
    <property type="entry name" value="UNCHARACTERIZED PROTEIN YVCK-RELATED"/>
    <property type="match status" value="1"/>
</dbReference>
<dbReference type="Pfam" id="PF01933">
    <property type="entry name" value="CofD"/>
    <property type="match status" value="1"/>
</dbReference>
<dbReference type="SUPFAM" id="SSF142338">
    <property type="entry name" value="CofD-like"/>
    <property type="match status" value="1"/>
</dbReference>
<feature type="chain" id="PRO_0000107804" description="Gluconeogenesis factor">
    <location>
        <begin position="1"/>
        <end position="317"/>
    </location>
</feature>
<proteinExistence type="inferred from homology"/>
<name>GNGF_BACSU</name>
<evidence type="ECO:0000255" key="1">
    <source>
        <dbReference type="HAMAP-Rule" id="MF_00973"/>
    </source>
</evidence>
<evidence type="ECO:0000269" key="2">
    <source>
    </source>
</evidence>
<evidence type="ECO:0000269" key="3">
    <source>
    </source>
</evidence>
<evidence type="ECO:0000305" key="4">
    <source>
    </source>
</evidence>
<accession>O06974</accession>
<comment type="function">
    <text evidence="1 2 3">Required for morphogenesis under gluconeogenic growth conditions. Required, in gluconeogenic growth conditions, for the correct localization of PBP1 and hence for displaying a normal rod shape.</text>
</comment>
<comment type="subcellular location">
    <subcellularLocation>
        <location evidence="1 3">Cytoplasm</location>
    </subcellularLocation>
    <text>Organized into coiled helical structures extending from one pole to the other. Localization does not require MreB.</text>
</comment>
<comment type="disruption phenotype">
    <text evidence="2">Deletion leads to growth defects when cells are grown on minimal medium containing ribose, gluconate, citrate, fumarate or succinate, but does not affect growth and morphology on minimal medium containing glycolytic substrates such as glucose, sucrose or glycerol. Mutants exhibit media-dependent filamentous or L-shape-like aberrant morphologies.</text>
</comment>
<comment type="miscellaneous">
    <text evidence="4">When bacteria are grown on a gluconeogenic carbon source, overproduction can restore a normal rod-shaped morphology in a mreB mutant by rescuing the PBP1 localization.</text>
</comment>
<comment type="similarity">
    <text evidence="1">Belongs to the gluconeogenesis factor family.</text>
</comment>
<organism>
    <name type="scientific">Bacillus subtilis (strain 168)</name>
    <dbReference type="NCBI Taxonomy" id="224308"/>
    <lineage>
        <taxon>Bacteria</taxon>
        <taxon>Bacillati</taxon>
        <taxon>Bacillota</taxon>
        <taxon>Bacilli</taxon>
        <taxon>Bacillales</taxon>
        <taxon>Bacillaceae</taxon>
        <taxon>Bacillus</taxon>
    </lineage>
</organism>
<reference key="1">
    <citation type="submission" date="1997-04" db="EMBL/GenBank/DDBJ databases">
        <authorList>
            <person name="Denizot F."/>
        </authorList>
    </citation>
    <scope>NUCLEOTIDE SEQUENCE [GENOMIC DNA]</scope>
    <source>
        <strain>168</strain>
    </source>
</reference>
<reference key="2">
    <citation type="journal article" date="1997" name="Nature">
        <title>The complete genome sequence of the Gram-positive bacterium Bacillus subtilis.</title>
        <authorList>
            <person name="Kunst F."/>
            <person name="Ogasawara N."/>
            <person name="Moszer I."/>
            <person name="Albertini A.M."/>
            <person name="Alloni G."/>
            <person name="Azevedo V."/>
            <person name="Bertero M.G."/>
            <person name="Bessieres P."/>
            <person name="Bolotin A."/>
            <person name="Borchert S."/>
            <person name="Borriss R."/>
            <person name="Boursier L."/>
            <person name="Brans A."/>
            <person name="Braun M."/>
            <person name="Brignell S.C."/>
            <person name="Bron S."/>
            <person name="Brouillet S."/>
            <person name="Bruschi C.V."/>
            <person name="Caldwell B."/>
            <person name="Capuano V."/>
            <person name="Carter N.M."/>
            <person name="Choi S.-K."/>
            <person name="Codani J.-J."/>
            <person name="Connerton I.F."/>
            <person name="Cummings N.J."/>
            <person name="Daniel R.A."/>
            <person name="Denizot F."/>
            <person name="Devine K.M."/>
            <person name="Duesterhoeft A."/>
            <person name="Ehrlich S.D."/>
            <person name="Emmerson P.T."/>
            <person name="Entian K.-D."/>
            <person name="Errington J."/>
            <person name="Fabret C."/>
            <person name="Ferrari E."/>
            <person name="Foulger D."/>
            <person name="Fritz C."/>
            <person name="Fujita M."/>
            <person name="Fujita Y."/>
            <person name="Fuma S."/>
            <person name="Galizzi A."/>
            <person name="Galleron N."/>
            <person name="Ghim S.-Y."/>
            <person name="Glaser P."/>
            <person name="Goffeau A."/>
            <person name="Golightly E.J."/>
            <person name="Grandi G."/>
            <person name="Guiseppi G."/>
            <person name="Guy B.J."/>
            <person name="Haga K."/>
            <person name="Haiech J."/>
            <person name="Harwood C.R."/>
            <person name="Henaut A."/>
            <person name="Hilbert H."/>
            <person name="Holsappel S."/>
            <person name="Hosono S."/>
            <person name="Hullo M.-F."/>
            <person name="Itaya M."/>
            <person name="Jones L.-M."/>
            <person name="Joris B."/>
            <person name="Karamata D."/>
            <person name="Kasahara Y."/>
            <person name="Klaerr-Blanchard M."/>
            <person name="Klein C."/>
            <person name="Kobayashi Y."/>
            <person name="Koetter P."/>
            <person name="Koningstein G."/>
            <person name="Krogh S."/>
            <person name="Kumano M."/>
            <person name="Kurita K."/>
            <person name="Lapidus A."/>
            <person name="Lardinois S."/>
            <person name="Lauber J."/>
            <person name="Lazarevic V."/>
            <person name="Lee S.-M."/>
            <person name="Levine A."/>
            <person name="Liu H."/>
            <person name="Masuda S."/>
            <person name="Mauel C."/>
            <person name="Medigue C."/>
            <person name="Medina N."/>
            <person name="Mellado R.P."/>
            <person name="Mizuno M."/>
            <person name="Moestl D."/>
            <person name="Nakai S."/>
            <person name="Noback M."/>
            <person name="Noone D."/>
            <person name="O'Reilly M."/>
            <person name="Ogawa K."/>
            <person name="Ogiwara A."/>
            <person name="Oudega B."/>
            <person name="Park S.-H."/>
            <person name="Parro V."/>
            <person name="Pohl T.M."/>
            <person name="Portetelle D."/>
            <person name="Porwollik S."/>
            <person name="Prescott A.M."/>
            <person name="Presecan E."/>
            <person name="Pujic P."/>
            <person name="Purnelle B."/>
            <person name="Rapoport G."/>
            <person name="Rey M."/>
            <person name="Reynolds S."/>
            <person name="Rieger M."/>
            <person name="Rivolta C."/>
            <person name="Rocha E."/>
            <person name="Roche B."/>
            <person name="Rose M."/>
            <person name="Sadaie Y."/>
            <person name="Sato T."/>
            <person name="Scanlan E."/>
            <person name="Schleich S."/>
            <person name="Schroeter R."/>
            <person name="Scoffone F."/>
            <person name="Sekiguchi J."/>
            <person name="Sekowska A."/>
            <person name="Seror S.J."/>
            <person name="Serror P."/>
            <person name="Shin B.-S."/>
            <person name="Soldo B."/>
            <person name="Sorokin A."/>
            <person name="Tacconi E."/>
            <person name="Takagi T."/>
            <person name="Takahashi H."/>
            <person name="Takemaru K."/>
            <person name="Takeuchi M."/>
            <person name="Tamakoshi A."/>
            <person name="Tanaka T."/>
            <person name="Terpstra P."/>
            <person name="Tognoni A."/>
            <person name="Tosato V."/>
            <person name="Uchiyama S."/>
            <person name="Vandenbol M."/>
            <person name="Vannier F."/>
            <person name="Vassarotti A."/>
            <person name="Viari A."/>
            <person name="Wambutt R."/>
            <person name="Wedler E."/>
            <person name="Wedler H."/>
            <person name="Weitzenegger T."/>
            <person name="Winters P."/>
            <person name="Wipat A."/>
            <person name="Yamamoto H."/>
            <person name="Yamane K."/>
            <person name="Yasumoto K."/>
            <person name="Yata K."/>
            <person name="Yoshida K."/>
            <person name="Yoshikawa H.-F."/>
            <person name="Zumstein E."/>
            <person name="Yoshikawa H."/>
            <person name="Danchin A."/>
        </authorList>
    </citation>
    <scope>NUCLEOTIDE SEQUENCE [LARGE SCALE GENOMIC DNA]</scope>
    <source>
        <strain>168</strain>
    </source>
</reference>
<reference key="3">
    <citation type="journal article" date="2005" name="Microbiology">
        <title>YvcK of Bacillus subtilis is required for a normal cell shape and for growth on Krebs cycle intermediates and substrates of the pentose phosphate pathway.</title>
        <authorList>
            <person name="Gorke B."/>
            <person name="Foulquier E."/>
            <person name="Galinier A."/>
        </authorList>
    </citation>
    <scope>FUNCTION</scope>
    <scope>DISRUPTION PHENOTYPE</scope>
    <source>
        <strain>168</strain>
    </source>
</reference>
<reference key="4">
    <citation type="journal article" date="2011" name="Mol. Microbiol.">
        <title>The YvcK protein is required for morphogenesis via localization of PBP1 under gluconeogenic growth conditions in Bacillus subtilis.</title>
        <authorList>
            <person name="Foulquier E."/>
            <person name="Pompeo F."/>
            <person name="Bernadac A."/>
            <person name="Espinosa L."/>
            <person name="Galinier A."/>
        </authorList>
    </citation>
    <scope>FUNCTION</scope>
    <scope>SUBCELLULAR LOCATION</scope>
    <scope>OVERPRODUCTION</scope>
</reference>